<feature type="chain" id="PRO_0000282697" description="ATP-dependent rRNA helicase rrp3">
    <location>
        <begin position="1"/>
        <end position="472"/>
    </location>
</feature>
<feature type="domain" description="Helicase ATP-binding" evidence="2">
    <location>
        <begin position="83"/>
        <end position="254"/>
    </location>
</feature>
<feature type="domain" description="Helicase C-terminal" evidence="3">
    <location>
        <begin position="282"/>
        <end position="426"/>
    </location>
</feature>
<feature type="region of interest" description="Disordered" evidence="4">
    <location>
        <begin position="1"/>
        <end position="51"/>
    </location>
</feature>
<feature type="region of interest" description="Disordered" evidence="4">
    <location>
        <begin position="451"/>
        <end position="472"/>
    </location>
</feature>
<feature type="short sequence motif" description="Q motif" evidence="5">
    <location>
        <begin position="52"/>
        <end position="80"/>
    </location>
</feature>
<feature type="short sequence motif" description="DEAD box" evidence="5">
    <location>
        <begin position="202"/>
        <end position="205"/>
    </location>
</feature>
<feature type="compositionally biased region" description="Basic and acidic residues" evidence="4">
    <location>
        <begin position="10"/>
        <end position="19"/>
    </location>
</feature>
<feature type="compositionally biased region" description="Polar residues" evidence="4">
    <location>
        <begin position="20"/>
        <end position="29"/>
    </location>
</feature>
<feature type="compositionally biased region" description="Basic residues" evidence="4">
    <location>
        <begin position="452"/>
        <end position="462"/>
    </location>
</feature>
<feature type="binding site" evidence="2">
    <location>
        <begin position="96"/>
        <end position="103"/>
    </location>
    <ligand>
        <name>ATP</name>
        <dbReference type="ChEBI" id="CHEBI:30616"/>
    </ligand>
</feature>
<protein>
    <recommendedName>
        <fullName evidence="5">ATP-dependent rRNA helicase rrp3</fullName>
        <ecNumber evidence="1">3.6.4.13</ecNumber>
    </recommendedName>
</protein>
<reference key="1">
    <citation type="journal article" date="2008" name="PLoS Genet.">
        <title>Genomic islands in the pathogenic filamentous fungus Aspergillus fumigatus.</title>
        <authorList>
            <person name="Fedorova N.D."/>
            <person name="Khaldi N."/>
            <person name="Joardar V.S."/>
            <person name="Maiti R."/>
            <person name="Amedeo P."/>
            <person name="Anderson M.J."/>
            <person name="Crabtree J."/>
            <person name="Silva J.C."/>
            <person name="Badger J.H."/>
            <person name="Albarraq A."/>
            <person name="Angiuoli S."/>
            <person name="Bussey H."/>
            <person name="Bowyer P."/>
            <person name="Cotty P.J."/>
            <person name="Dyer P.S."/>
            <person name="Egan A."/>
            <person name="Galens K."/>
            <person name="Fraser-Liggett C.M."/>
            <person name="Haas B.J."/>
            <person name="Inman J.M."/>
            <person name="Kent R."/>
            <person name="Lemieux S."/>
            <person name="Malavazi I."/>
            <person name="Orvis J."/>
            <person name="Roemer T."/>
            <person name="Ronning C.M."/>
            <person name="Sundaram J.P."/>
            <person name="Sutton G."/>
            <person name="Turner G."/>
            <person name="Venter J.C."/>
            <person name="White O.R."/>
            <person name="Whitty B.R."/>
            <person name="Youngman P."/>
            <person name="Wolfe K.H."/>
            <person name="Goldman G.H."/>
            <person name="Wortman J.R."/>
            <person name="Jiang B."/>
            <person name="Denning D.W."/>
            <person name="Nierman W.C."/>
        </authorList>
    </citation>
    <scope>NUCLEOTIDE SEQUENCE [LARGE SCALE GENOMIC DNA]</scope>
    <source>
        <strain>ATCC 1020 / DSM 3700 / CBS 544.65 / FGSC A1164 / JCM 1740 / NRRL 181 / WB 181</strain>
    </source>
</reference>
<dbReference type="EC" id="3.6.4.13" evidence="1"/>
<dbReference type="EMBL" id="DS027688">
    <property type="protein sequence ID" value="EAW23148.1"/>
    <property type="molecule type" value="Genomic_DNA"/>
</dbReference>
<dbReference type="RefSeq" id="XP_001265045.1">
    <property type="nucleotide sequence ID" value="XM_001265044.1"/>
</dbReference>
<dbReference type="SMR" id="A1D405"/>
<dbReference type="STRING" id="331117.A1D405"/>
<dbReference type="EnsemblFungi" id="EAW23148">
    <property type="protein sequence ID" value="EAW23148"/>
    <property type="gene ID" value="NFIA_018490"/>
</dbReference>
<dbReference type="GeneID" id="4591870"/>
<dbReference type="KEGG" id="nfi:NFIA_018490"/>
<dbReference type="VEuPathDB" id="FungiDB:NFIA_018490"/>
<dbReference type="eggNOG" id="KOG0330">
    <property type="taxonomic scope" value="Eukaryota"/>
</dbReference>
<dbReference type="HOGENOM" id="CLU_003041_1_1_1"/>
<dbReference type="OMA" id="GIGIKCC"/>
<dbReference type="OrthoDB" id="10261904at2759"/>
<dbReference type="Proteomes" id="UP000006702">
    <property type="component" value="Unassembled WGS sequence"/>
</dbReference>
<dbReference type="GO" id="GO:0005829">
    <property type="term" value="C:cytosol"/>
    <property type="evidence" value="ECO:0007669"/>
    <property type="project" value="TreeGrafter"/>
</dbReference>
<dbReference type="GO" id="GO:0005634">
    <property type="term" value="C:nucleus"/>
    <property type="evidence" value="ECO:0007669"/>
    <property type="project" value="UniProtKB-SubCell"/>
</dbReference>
<dbReference type="GO" id="GO:0005524">
    <property type="term" value="F:ATP binding"/>
    <property type="evidence" value="ECO:0007669"/>
    <property type="project" value="UniProtKB-KW"/>
</dbReference>
<dbReference type="GO" id="GO:0016887">
    <property type="term" value="F:ATP hydrolysis activity"/>
    <property type="evidence" value="ECO:0007669"/>
    <property type="project" value="RHEA"/>
</dbReference>
<dbReference type="GO" id="GO:0003723">
    <property type="term" value="F:RNA binding"/>
    <property type="evidence" value="ECO:0007669"/>
    <property type="project" value="UniProtKB-KW"/>
</dbReference>
<dbReference type="GO" id="GO:0003724">
    <property type="term" value="F:RNA helicase activity"/>
    <property type="evidence" value="ECO:0007669"/>
    <property type="project" value="UniProtKB-EC"/>
</dbReference>
<dbReference type="GO" id="GO:0006364">
    <property type="term" value="P:rRNA processing"/>
    <property type="evidence" value="ECO:0007669"/>
    <property type="project" value="UniProtKB-KW"/>
</dbReference>
<dbReference type="CDD" id="cd17954">
    <property type="entry name" value="DEADc_DDX47"/>
    <property type="match status" value="1"/>
</dbReference>
<dbReference type="CDD" id="cd18787">
    <property type="entry name" value="SF2_C_DEAD"/>
    <property type="match status" value="1"/>
</dbReference>
<dbReference type="Gene3D" id="3.40.50.300">
    <property type="entry name" value="P-loop containing nucleotide triphosphate hydrolases"/>
    <property type="match status" value="2"/>
</dbReference>
<dbReference type="InterPro" id="IPR044765">
    <property type="entry name" value="DDX47/Rrp3_DEADc"/>
</dbReference>
<dbReference type="InterPro" id="IPR011545">
    <property type="entry name" value="DEAD/DEAH_box_helicase_dom"/>
</dbReference>
<dbReference type="InterPro" id="IPR050079">
    <property type="entry name" value="DEAD_box_RNA_helicase"/>
</dbReference>
<dbReference type="InterPro" id="IPR014001">
    <property type="entry name" value="Helicase_ATP-bd"/>
</dbReference>
<dbReference type="InterPro" id="IPR001650">
    <property type="entry name" value="Helicase_C-like"/>
</dbReference>
<dbReference type="InterPro" id="IPR027417">
    <property type="entry name" value="P-loop_NTPase"/>
</dbReference>
<dbReference type="InterPro" id="IPR000629">
    <property type="entry name" value="RNA-helicase_DEAD-box_CS"/>
</dbReference>
<dbReference type="InterPro" id="IPR014014">
    <property type="entry name" value="RNA_helicase_DEAD_Q_motif"/>
</dbReference>
<dbReference type="PANTHER" id="PTHR47959">
    <property type="entry name" value="ATP-DEPENDENT RNA HELICASE RHLE-RELATED"/>
    <property type="match status" value="1"/>
</dbReference>
<dbReference type="PANTHER" id="PTHR47959:SF20">
    <property type="entry name" value="RNA HELICASE"/>
    <property type="match status" value="1"/>
</dbReference>
<dbReference type="Pfam" id="PF00270">
    <property type="entry name" value="DEAD"/>
    <property type="match status" value="1"/>
</dbReference>
<dbReference type="Pfam" id="PF00271">
    <property type="entry name" value="Helicase_C"/>
    <property type="match status" value="1"/>
</dbReference>
<dbReference type="SMART" id="SM00487">
    <property type="entry name" value="DEXDc"/>
    <property type="match status" value="1"/>
</dbReference>
<dbReference type="SMART" id="SM00490">
    <property type="entry name" value="HELICc"/>
    <property type="match status" value="1"/>
</dbReference>
<dbReference type="SUPFAM" id="SSF52540">
    <property type="entry name" value="P-loop containing nucleoside triphosphate hydrolases"/>
    <property type="match status" value="1"/>
</dbReference>
<dbReference type="PROSITE" id="PS00039">
    <property type="entry name" value="DEAD_ATP_HELICASE"/>
    <property type="match status" value="1"/>
</dbReference>
<dbReference type="PROSITE" id="PS51192">
    <property type="entry name" value="HELICASE_ATP_BIND_1"/>
    <property type="match status" value="1"/>
</dbReference>
<dbReference type="PROSITE" id="PS51194">
    <property type="entry name" value="HELICASE_CTER"/>
    <property type="match status" value="1"/>
</dbReference>
<dbReference type="PROSITE" id="PS51195">
    <property type="entry name" value="Q_MOTIF"/>
    <property type="match status" value="1"/>
</dbReference>
<name>RRP3_NEOFI</name>
<organism>
    <name type="scientific">Neosartorya fischeri (strain ATCC 1020 / DSM 3700 / CBS 544.65 / FGSC A1164 / JCM 1740 / NRRL 181 / WB 181)</name>
    <name type="common">Aspergillus fischerianus</name>
    <dbReference type="NCBI Taxonomy" id="331117"/>
    <lineage>
        <taxon>Eukaryota</taxon>
        <taxon>Fungi</taxon>
        <taxon>Dikarya</taxon>
        <taxon>Ascomycota</taxon>
        <taxon>Pezizomycotina</taxon>
        <taxon>Eurotiomycetes</taxon>
        <taxon>Eurotiomycetidae</taxon>
        <taxon>Eurotiales</taxon>
        <taxon>Aspergillaceae</taxon>
        <taxon>Aspergillus</taxon>
        <taxon>Aspergillus subgen. Fumigati</taxon>
    </lineage>
</organism>
<accession>A1D405</accession>
<keyword id="KW-0067">ATP-binding</keyword>
<keyword id="KW-0347">Helicase</keyword>
<keyword id="KW-0378">Hydrolase</keyword>
<keyword id="KW-0547">Nucleotide-binding</keyword>
<keyword id="KW-0539">Nucleus</keyword>
<keyword id="KW-1185">Reference proteome</keyword>
<keyword id="KW-0690">Ribosome biogenesis</keyword>
<keyword id="KW-0694">RNA-binding</keyword>
<keyword id="KW-0698">rRNA processing</keyword>
<evidence type="ECO:0000250" key="1">
    <source>
        <dbReference type="UniProtKB" id="P38712"/>
    </source>
</evidence>
<evidence type="ECO:0000255" key="2">
    <source>
        <dbReference type="PROSITE-ProRule" id="PRU00541"/>
    </source>
</evidence>
<evidence type="ECO:0000255" key="3">
    <source>
        <dbReference type="PROSITE-ProRule" id="PRU00542"/>
    </source>
</evidence>
<evidence type="ECO:0000256" key="4">
    <source>
        <dbReference type="SAM" id="MobiDB-lite"/>
    </source>
</evidence>
<evidence type="ECO:0000305" key="5"/>
<gene>
    <name evidence="1" type="primary">rrp3</name>
    <name type="ORF">NFIA_018490</name>
</gene>
<sequence length="472" mass="52138">MPDVKKRKIAHEAPEHGSDAESTSSHESVAQQDDTAETQDEAAATETRPAPKSFKDLGIIDQLCEACETMGYKAPTPIQAESIPLALQGRDLIGLAETGSGKTAAFALPILQALMEKPQSFFGLILAPTRELAFQISKSFESLGSTINVRCAVIVGGMDMVSQSIALGKKPHIIVATPGRLLDHLENTKGFSLRTLKYLVMDEADRLLDMDFGPLLDKILKVLPRERRTFLFSATMSSKVESLQRASLSNPLRVSVSSNKYQTVSTLLQSYLFLPHKHKDIYLVYLLNEFVGQSAIIFTRTVHETQRISFLLRSLGFGAIPLHGQLSQSARLGALGKFRSRSRDILVATDVAARGLDIPSVDVVLNFDLPTDSKTYVHRVGRTARAGKSGVAISFVTQYDVEIWLRIEGALGKKLKEYELEKDEVMVLAERVGEAQRQAIVEMKNFDEKRGTKAKKFGKGKRSRDEMDQEEG</sequence>
<proteinExistence type="inferred from homology"/>
<comment type="function">
    <text evidence="1">ATP-dependent rRNA helicase required for pre-ribosomal RNA processing. Involved in the maturation of the 35S-pre-rRNA and to its cleavage to mature 18S rRNA.</text>
</comment>
<comment type="catalytic activity">
    <reaction evidence="1">
        <text>ATP + H2O = ADP + phosphate + H(+)</text>
        <dbReference type="Rhea" id="RHEA:13065"/>
        <dbReference type="ChEBI" id="CHEBI:15377"/>
        <dbReference type="ChEBI" id="CHEBI:15378"/>
        <dbReference type="ChEBI" id="CHEBI:30616"/>
        <dbReference type="ChEBI" id="CHEBI:43474"/>
        <dbReference type="ChEBI" id="CHEBI:456216"/>
        <dbReference type="EC" id="3.6.4.13"/>
    </reaction>
</comment>
<comment type="subunit">
    <text evidence="1">Interacts with the SSU processome.</text>
</comment>
<comment type="subcellular location">
    <subcellularLocation>
        <location evidence="5">Nucleus</location>
    </subcellularLocation>
</comment>
<comment type="domain">
    <text evidence="5">The Q motif is unique to and characteristic of the DEAD box family of RNA helicases and controls ATP binding and hydrolysis.</text>
</comment>
<comment type="similarity">
    <text evidence="5">Belongs to the DEAD box helicase family. DDX47/RRP3 subfamily.</text>
</comment>